<organism>
    <name type="scientific">Pseudomonas savastanoi pv. phaseolicola (strain 1448A / Race 6)</name>
    <name type="common">Pseudomonas syringae pv. phaseolicola (strain 1448A / Race 6)</name>
    <dbReference type="NCBI Taxonomy" id="264730"/>
    <lineage>
        <taxon>Bacteria</taxon>
        <taxon>Pseudomonadati</taxon>
        <taxon>Pseudomonadota</taxon>
        <taxon>Gammaproteobacteria</taxon>
        <taxon>Pseudomonadales</taxon>
        <taxon>Pseudomonadaceae</taxon>
        <taxon>Pseudomonas</taxon>
    </lineage>
</organism>
<accession>Q48F42</accession>
<evidence type="ECO:0000255" key="1">
    <source>
        <dbReference type="HAMAP-Rule" id="MF_01523"/>
    </source>
</evidence>
<comment type="function">
    <text evidence="1">Specifically methylates the guanosine in position 1516 of 16S rRNA.</text>
</comment>
<comment type="catalytic activity">
    <reaction evidence="1">
        <text>guanosine(1516) in 16S rRNA + S-adenosyl-L-methionine = N(2)-methylguanosine(1516) in 16S rRNA + S-adenosyl-L-homocysteine + H(+)</text>
        <dbReference type="Rhea" id="RHEA:43220"/>
        <dbReference type="Rhea" id="RHEA-COMP:10412"/>
        <dbReference type="Rhea" id="RHEA-COMP:10413"/>
        <dbReference type="ChEBI" id="CHEBI:15378"/>
        <dbReference type="ChEBI" id="CHEBI:57856"/>
        <dbReference type="ChEBI" id="CHEBI:59789"/>
        <dbReference type="ChEBI" id="CHEBI:74269"/>
        <dbReference type="ChEBI" id="CHEBI:74481"/>
        <dbReference type="EC" id="2.1.1.242"/>
    </reaction>
</comment>
<comment type="subcellular location">
    <subcellularLocation>
        <location evidence="1">Cytoplasm</location>
    </subcellularLocation>
</comment>
<comment type="similarity">
    <text evidence="1">Belongs to the methyltransferase superfamily. RsmJ family.</text>
</comment>
<feature type="chain" id="PRO_0000244277" description="Ribosomal RNA small subunit methyltransferase J">
    <location>
        <begin position="1"/>
        <end position="269"/>
    </location>
</feature>
<feature type="binding site" evidence="1">
    <location>
        <begin position="125"/>
        <end position="126"/>
    </location>
    <ligand>
        <name>S-adenosyl-L-methionine</name>
        <dbReference type="ChEBI" id="CHEBI:59789"/>
    </ligand>
</feature>
<feature type="binding site" evidence="1">
    <location>
        <position position="179"/>
    </location>
    <ligand>
        <name>S-adenosyl-L-methionine</name>
        <dbReference type="ChEBI" id="CHEBI:59789"/>
    </ligand>
</feature>
<protein>
    <recommendedName>
        <fullName evidence="1">Ribosomal RNA small subunit methyltransferase J</fullName>
        <ecNumber evidence="1">2.1.1.242</ecNumber>
    </recommendedName>
    <alternativeName>
        <fullName evidence="1">16S rRNA m2G1516 methyltransferase</fullName>
    </alternativeName>
    <alternativeName>
        <fullName evidence="1">rRNA (guanine-N(2)-)-methyltransferase</fullName>
    </alternativeName>
</protein>
<keyword id="KW-0963">Cytoplasm</keyword>
<keyword id="KW-0489">Methyltransferase</keyword>
<keyword id="KW-0698">rRNA processing</keyword>
<keyword id="KW-0949">S-adenosyl-L-methionine</keyword>
<keyword id="KW-0808">Transferase</keyword>
<name>RSMJ_PSE14</name>
<gene>
    <name evidence="1" type="primary">rsmJ</name>
    <name type="ordered locus">PSPPH_3857</name>
</gene>
<sequence>MIEQQTGSRIRVEALAVAGQEQAEHWAQRLGLPLHDAEADFALQSTDDGLQLQQLGDDAPGAVRVDFVEGAVAHRRLFGGGTGQMIAKAVGIQPGVRPSVLDATAGLGKDAFVLASLGCELSLIERQPIIAALLEDGLARGRDDRDVGSIVARMHLLTGNSIEIIRGWTAEPPQVIYLDPMFPHREKNALVKKEMRLFRPLVGDDMDAPALLEAALALATHRVVVKRPRKAPCIDGPKPGYALDGKSSRYDIYPKKALKPKAVTDDSGA</sequence>
<reference key="1">
    <citation type="journal article" date="2005" name="J. Bacteriol.">
        <title>Whole-genome sequence analysis of Pseudomonas syringae pv. phaseolicola 1448A reveals divergence among pathovars in genes involved in virulence and transposition.</title>
        <authorList>
            <person name="Joardar V."/>
            <person name="Lindeberg M."/>
            <person name="Jackson R.W."/>
            <person name="Selengut J."/>
            <person name="Dodson R."/>
            <person name="Brinkac L.M."/>
            <person name="Daugherty S.C."/>
            <person name="DeBoy R.T."/>
            <person name="Durkin A.S."/>
            <person name="Gwinn Giglio M."/>
            <person name="Madupu R."/>
            <person name="Nelson W.C."/>
            <person name="Rosovitz M.J."/>
            <person name="Sullivan S.A."/>
            <person name="Crabtree J."/>
            <person name="Creasy T."/>
            <person name="Davidsen T.M."/>
            <person name="Haft D.H."/>
            <person name="Zafar N."/>
            <person name="Zhou L."/>
            <person name="Halpin R."/>
            <person name="Holley T."/>
            <person name="Khouri H.M."/>
            <person name="Feldblyum T.V."/>
            <person name="White O."/>
            <person name="Fraser C.M."/>
            <person name="Chatterjee A.K."/>
            <person name="Cartinhour S."/>
            <person name="Schneider D."/>
            <person name="Mansfield J.W."/>
            <person name="Collmer A."/>
            <person name="Buell R."/>
        </authorList>
    </citation>
    <scope>NUCLEOTIDE SEQUENCE [LARGE SCALE GENOMIC DNA]</scope>
    <source>
        <strain>1448A / Race 6</strain>
    </source>
</reference>
<proteinExistence type="inferred from homology"/>
<dbReference type="EC" id="2.1.1.242" evidence="1"/>
<dbReference type="EMBL" id="CP000058">
    <property type="protein sequence ID" value="AAZ34125.1"/>
    <property type="molecule type" value="Genomic_DNA"/>
</dbReference>
<dbReference type="RefSeq" id="WP_004666035.1">
    <property type="nucleotide sequence ID" value="NC_005773.3"/>
</dbReference>
<dbReference type="SMR" id="Q48F42"/>
<dbReference type="KEGG" id="psp:PSPPH_3857"/>
<dbReference type="eggNOG" id="COG0742">
    <property type="taxonomic scope" value="Bacteria"/>
</dbReference>
<dbReference type="HOGENOM" id="CLU_076324_0_1_6"/>
<dbReference type="Proteomes" id="UP000000551">
    <property type="component" value="Chromosome"/>
</dbReference>
<dbReference type="GO" id="GO:0005737">
    <property type="term" value="C:cytoplasm"/>
    <property type="evidence" value="ECO:0007669"/>
    <property type="project" value="UniProtKB-SubCell"/>
</dbReference>
<dbReference type="GO" id="GO:0008990">
    <property type="term" value="F:rRNA (guanine-N2-)-methyltransferase activity"/>
    <property type="evidence" value="ECO:0007669"/>
    <property type="project" value="UniProtKB-UniRule"/>
</dbReference>
<dbReference type="Gene3D" id="3.40.50.150">
    <property type="entry name" value="Vaccinia Virus protein VP39"/>
    <property type="match status" value="1"/>
</dbReference>
<dbReference type="HAMAP" id="MF_01523">
    <property type="entry name" value="16SrRNA_methyltr_J"/>
    <property type="match status" value="1"/>
</dbReference>
<dbReference type="InterPro" id="IPR007536">
    <property type="entry name" value="16SrRNA_methylTrfase_J"/>
</dbReference>
<dbReference type="InterPro" id="IPR029063">
    <property type="entry name" value="SAM-dependent_MTases_sf"/>
</dbReference>
<dbReference type="PANTHER" id="PTHR36112">
    <property type="entry name" value="RIBOSOMAL RNA SMALL SUBUNIT METHYLTRANSFERASE J"/>
    <property type="match status" value="1"/>
</dbReference>
<dbReference type="PANTHER" id="PTHR36112:SF1">
    <property type="entry name" value="RIBOSOMAL RNA SMALL SUBUNIT METHYLTRANSFERASE J"/>
    <property type="match status" value="1"/>
</dbReference>
<dbReference type="Pfam" id="PF04445">
    <property type="entry name" value="SAM_MT"/>
    <property type="match status" value="1"/>
</dbReference>
<dbReference type="SUPFAM" id="SSF53335">
    <property type="entry name" value="S-adenosyl-L-methionine-dependent methyltransferases"/>
    <property type="match status" value="1"/>
</dbReference>